<keyword id="KW-0479">Metal-binding</keyword>
<keyword id="KW-0687">Ribonucleoprotein</keyword>
<keyword id="KW-0689">Ribosomal protein</keyword>
<keyword id="KW-0694">RNA-binding</keyword>
<keyword id="KW-0699">rRNA-binding</keyword>
<keyword id="KW-0862">Zinc</keyword>
<sequence length="71" mass="7782">MKQGIHPKYEQVTASCSCGNVIKINSTVGHDLNLDVCGECHPFYTGKQRDVASGGRVDRFNKRFSVPGAKK</sequence>
<protein>
    <recommendedName>
        <fullName evidence="1">Large ribosomal subunit protein bL31</fullName>
    </recommendedName>
    <alternativeName>
        <fullName evidence="2">50S ribosomal protein L31</fullName>
    </alternativeName>
</protein>
<comment type="function">
    <text evidence="1">Binds the 23S rRNA.</text>
</comment>
<comment type="cofactor">
    <cofactor evidence="1">
        <name>Zn(2+)</name>
        <dbReference type="ChEBI" id="CHEBI:29105"/>
    </cofactor>
    <text evidence="1">Binds 1 zinc ion per subunit.</text>
</comment>
<comment type="subunit">
    <text evidence="1">Part of the 50S ribosomal subunit.</text>
</comment>
<comment type="similarity">
    <text evidence="1">Belongs to the bacterial ribosomal protein bL31 family. Type A subfamily.</text>
</comment>
<feature type="chain" id="PRO_1000126773" description="Large ribosomal subunit protein bL31">
    <location>
        <begin position="1"/>
        <end position="71"/>
    </location>
</feature>
<feature type="binding site" evidence="1">
    <location>
        <position position="16"/>
    </location>
    <ligand>
        <name>Zn(2+)</name>
        <dbReference type="ChEBI" id="CHEBI:29105"/>
    </ligand>
</feature>
<feature type="binding site" evidence="1">
    <location>
        <position position="18"/>
    </location>
    <ligand>
        <name>Zn(2+)</name>
        <dbReference type="ChEBI" id="CHEBI:29105"/>
    </ligand>
</feature>
<feature type="binding site" evidence="1">
    <location>
        <position position="37"/>
    </location>
    <ligand>
        <name>Zn(2+)</name>
        <dbReference type="ChEBI" id="CHEBI:29105"/>
    </ligand>
</feature>
<feature type="binding site" evidence="1">
    <location>
        <position position="40"/>
    </location>
    <ligand>
        <name>Zn(2+)</name>
        <dbReference type="ChEBI" id="CHEBI:29105"/>
    </ligand>
</feature>
<dbReference type="EMBL" id="CP000950">
    <property type="protein sequence ID" value="ACA70357.1"/>
    <property type="molecule type" value="Genomic_DNA"/>
</dbReference>
<dbReference type="RefSeq" id="WP_002216737.1">
    <property type="nucleotide sequence ID" value="NZ_CP009792.1"/>
</dbReference>
<dbReference type="SMR" id="B1JQ70"/>
<dbReference type="GeneID" id="96663581"/>
<dbReference type="KEGG" id="ypy:YPK_4098"/>
<dbReference type="PATRIC" id="fig|502800.11.peg.446"/>
<dbReference type="GO" id="GO:1990904">
    <property type="term" value="C:ribonucleoprotein complex"/>
    <property type="evidence" value="ECO:0007669"/>
    <property type="project" value="UniProtKB-KW"/>
</dbReference>
<dbReference type="GO" id="GO:0005840">
    <property type="term" value="C:ribosome"/>
    <property type="evidence" value="ECO:0007669"/>
    <property type="project" value="UniProtKB-KW"/>
</dbReference>
<dbReference type="GO" id="GO:0046872">
    <property type="term" value="F:metal ion binding"/>
    <property type="evidence" value="ECO:0007669"/>
    <property type="project" value="UniProtKB-KW"/>
</dbReference>
<dbReference type="GO" id="GO:0019843">
    <property type="term" value="F:rRNA binding"/>
    <property type="evidence" value="ECO:0007669"/>
    <property type="project" value="UniProtKB-KW"/>
</dbReference>
<dbReference type="GO" id="GO:0003735">
    <property type="term" value="F:structural constituent of ribosome"/>
    <property type="evidence" value="ECO:0007669"/>
    <property type="project" value="InterPro"/>
</dbReference>
<dbReference type="GO" id="GO:0006412">
    <property type="term" value="P:translation"/>
    <property type="evidence" value="ECO:0007669"/>
    <property type="project" value="UniProtKB-UniRule"/>
</dbReference>
<dbReference type="FunFam" id="4.10.830.30:FF:000001">
    <property type="entry name" value="50S ribosomal protein L31"/>
    <property type="match status" value="1"/>
</dbReference>
<dbReference type="Gene3D" id="4.10.830.30">
    <property type="entry name" value="Ribosomal protein L31"/>
    <property type="match status" value="1"/>
</dbReference>
<dbReference type="HAMAP" id="MF_00501">
    <property type="entry name" value="Ribosomal_bL31_1"/>
    <property type="match status" value="1"/>
</dbReference>
<dbReference type="InterPro" id="IPR034704">
    <property type="entry name" value="Ribosomal_bL28/bL31-like_sf"/>
</dbReference>
<dbReference type="InterPro" id="IPR002150">
    <property type="entry name" value="Ribosomal_bL31"/>
</dbReference>
<dbReference type="InterPro" id="IPR027491">
    <property type="entry name" value="Ribosomal_bL31_A"/>
</dbReference>
<dbReference type="InterPro" id="IPR042105">
    <property type="entry name" value="Ribosomal_bL31_sf"/>
</dbReference>
<dbReference type="NCBIfam" id="TIGR00105">
    <property type="entry name" value="L31"/>
    <property type="match status" value="1"/>
</dbReference>
<dbReference type="NCBIfam" id="NF000612">
    <property type="entry name" value="PRK00019.1"/>
    <property type="match status" value="1"/>
</dbReference>
<dbReference type="PANTHER" id="PTHR33280">
    <property type="entry name" value="50S RIBOSOMAL PROTEIN L31, CHLOROPLASTIC"/>
    <property type="match status" value="1"/>
</dbReference>
<dbReference type="PANTHER" id="PTHR33280:SF6">
    <property type="entry name" value="LARGE RIBOSOMAL SUBUNIT PROTEIN BL31A"/>
    <property type="match status" value="1"/>
</dbReference>
<dbReference type="Pfam" id="PF01197">
    <property type="entry name" value="Ribosomal_L31"/>
    <property type="match status" value="1"/>
</dbReference>
<dbReference type="PRINTS" id="PR01249">
    <property type="entry name" value="RIBOSOMALL31"/>
</dbReference>
<dbReference type="SUPFAM" id="SSF143800">
    <property type="entry name" value="L28p-like"/>
    <property type="match status" value="1"/>
</dbReference>
<dbReference type="PROSITE" id="PS01143">
    <property type="entry name" value="RIBOSOMAL_L31"/>
    <property type="match status" value="1"/>
</dbReference>
<name>RL31_YERPY</name>
<gene>
    <name evidence="1" type="primary">rpmE</name>
    <name type="ordered locus">YPK_4098</name>
</gene>
<organism>
    <name type="scientific">Yersinia pseudotuberculosis serotype O:3 (strain YPIII)</name>
    <dbReference type="NCBI Taxonomy" id="502800"/>
    <lineage>
        <taxon>Bacteria</taxon>
        <taxon>Pseudomonadati</taxon>
        <taxon>Pseudomonadota</taxon>
        <taxon>Gammaproteobacteria</taxon>
        <taxon>Enterobacterales</taxon>
        <taxon>Yersiniaceae</taxon>
        <taxon>Yersinia</taxon>
    </lineage>
</organism>
<accession>B1JQ70</accession>
<proteinExistence type="inferred from homology"/>
<evidence type="ECO:0000255" key="1">
    <source>
        <dbReference type="HAMAP-Rule" id="MF_00501"/>
    </source>
</evidence>
<evidence type="ECO:0000305" key="2"/>
<reference key="1">
    <citation type="submission" date="2008-02" db="EMBL/GenBank/DDBJ databases">
        <title>Complete sequence of Yersinia pseudotuberculosis YPIII.</title>
        <authorList>
            <consortium name="US DOE Joint Genome Institute"/>
            <person name="Copeland A."/>
            <person name="Lucas S."/>
            <person name="Lapidus A."/>
            <person name="Glavina del Rio T."/>
            <person name="Dalin E."/>
            <person name="Tice H."/>
            <person name="Bruce D."/>
            <person name="Goodwin L."/>
            <person name="Pitluck S."/>
            <person name="Munk A.C."/>
            <person name="Brettin T."/>
            <person name="Detter J.C."/>
            <person name="Han C."/>
            <person name="Tapia R."/>
            <person name="Schmutz J."/>
            <person name="Larimer F."/>
            <person name="Land M."/>
            <person name="Hauser L."/>
            <person name="Challacombe J.F."/>
            <person name="Green L."/>
            <person name="Lindler L.E."/>
            <person name="Nikolich M.P."/>
            <person name="Richardson P."/>
        </authorList>
    </citation>
    <scope>NUCLEOTIDE SEQUENCE [LARGE SCALE GENOMIC DNA]</scope>
    <source>
        <strain>YPIII</strain>
    </source>
</reference>